<gene>
    <name evidence="2" type="primary">dps</name>
    <name type="ordered locus">SBO_0703</name>
</gene>
<keyword id="KW-0963">Cytoplasm</keyword>
<keyword id="KW-0226">DNA condensation</keyword>
<keyword id="KW-0238">DNA-binding</keyword>
<keyword id="KW-0408">Iron</keyword>
<keyword id="KW-0409">Iron storage</keyword>
<keyword id="KW-0479">Metal-binding</keyword>
<keyword id="KW-0560">Oxidoreductase</keyword>
<proteinExistence type="inferred from homology"/>
<organism>
    <name type="scientific">Shigella boydii serotype 4 (strain Sb227)</name>
    <dbReference type="NCBI Taxonomy" id="300268"/>
    <lineage>
        <taxon>Bacteria</taxon>
        <taxon>Pseudomonadati</taxon>
        <taxon>Pseudomonadota</taxon>
        <taxon>Gammaproteobacteria</taxon>
        <taxon>Enterobacterales</taxon>
        <taxon>Enterobacteriaceae</taxon>
        <taxon>Shigella</taxon>
    </lineage>
</organism>
<protein>
    <recommendedName>
        <fullName evidence="2">DNA protection during starvation protein</fullName>
        <ecNumber evidence="2">1.16.-.-</ecNumber>
    </recommendedName>
</protein>
<feature type="initiator methionine" description="Removed" evidence="1">
    <location>
        <position position="1"/>
    </location>
</feature>
<feature type="chain" id="PRO_0000271594" description="DNA protection during starvation protein">
    <location>
        <begin position="2"/>
        <end position="167"/>
    </location>
</feature>
<feature type="binding site" evidence="2">
    <location>
        <position position="51"/>
    </location>
    <ligand>
        <name>Fe cation</name>
        <dbReference type="ChEBI" id="CHEBI:24875"/>
        <label>1</label>
        <note>ligand shared between two dodecameric partners</note>
    </ligand>
</feature>
<feature type="binding site" description="in other chain" evidence="2">
    <location>
        <position position="78"/>
    </location>
    <ligand>
        <name>Fe cation</name>
        <dbReference type="ChEBI" id="CHEBI:24875"/>
        <label>1</label>
        <note>ligand shared between two dodecameric partners</note>
    </ligand>
</feature>
<feature type="binding site" description="in other chain" evidence="2">
    <location>
        <position position="82"/>
    </location>
    <ligand>
        <name>Fe cation</name>
        <dbReference type="ChEBI" id="CHEBI:24875"/>
        <label>1</label>
        <note>ligand shared between two dodecameric partners</note>
    </ligand>
</feature>
<feature type="binding site" evidence="2">
    <location>
        <position position="82"/>
    </location>
    <ligand>
        <name>Fe cation</name>
        <dbReference type="ChEBI" id="CHEBI:24875"/>
        <label>2</label>
    </ligand>
</feature>
<dbReference type="EC" id="1.16.-.-" evidence="2"/>
<dbReference type="EMBL" id="CP000036">
    <property type="protein sequence ID" value="ABB65377.1"/>
    <property type="molecule type" value="Genomic_DNA"/>
</dbReference>
<dbReference type="RefSeq" id="WP_000100800.1">
    <property type="nucleotide sequence ID" value="NC_007613.1"/>
</dbReference>
<dbReference type="SMR" id="Q323Y1"/>
<dbReference type="GeneID" id="93776616"/>
<dbReference type="KEGG" id="sbo:SBO_0703"/>
<dbReference type="HOGENOM" id="CLU_098183_1_2_6"/>
<dbReference type="Proteomes" id="UP000007067">
    <property type="component" value="Chromosome"/>
</dbReference>
<dbReference type="GO" id="GO:0005737">
    <property type="term" value="C:cytoplasm"/>
    <property type="evidence" value="ECO:0007669"/>
    <property type="project" value="UniProtKB-UniRule"/>
</dbReference>
<dbReference type="GO" id="GO:0009295">
    <property type="term" value="C:nucleoid"/>
    <property type="evidence" value="ECO:0007669"/>
    <property type="project" value="UniProtKB-SubCell"/>
</dbReference>
<dbReference type="GO" id="GO:0003677">
    <property type="term" value="F:DNA binding"/>
    <property type="evidence" value="ECO:0007669"/>
    <property type="project" value="UniProtKB-UniRule"/>
</dbReference>
<dbReference type="GO" id="GO:0008199">
    <property type="term" value="F:ferric iron binding"/>
    <property type="evidence" value="ECO:0007669"/>
    <property type="project" value="UniProtKB-UniRule"/>
</dbReference>
<dbReference type="GO" id="GO:0016722">
    <property type="term" value="F:oxidoreductase activity, acting on metal ions"/>
    <property type="evidence" value="ECO:0007669"/>
    <property type="project" value="InterPro"/>
</dbReference>
<dbReference type="GO" id="GO:0030261">
    <property type="term" value="P:chromosome condensation"/>
    <property type="evidence" value="ECO:0007669"/>
    <property type="project" value="UniProtKB-KW"/>
</dbReference>
<dbReference type="GO" id="GO:0006879">
    <property type="term" value="P:intracellular iron ion homeostasis"/>
    <property type="evidence" value="ECO:0007669"/>
    <property type="project" value="UniProtKB-KW"/>
</dbReference>
<dbReference type="CDD" id="cd01043">
    <property type="entry name" value="DPS"/>
    <property type="match status" value="1"/>
</dbReference>
<dbReference type="FunFam" id="1.20.1260.10:FF:000003">
    <property type="entry name" value="DNA protection during starvation protein"/>
    <property type="match status" value="1"/>
</dbReference>
<dbReference type="Gene3D" id="1.20.1260.10">
    <property type="match status" value="1"/>
</dbReference>
<dbReference type="HAMAP" id="MF_01441">
    <property type="entry name" value="Dps"/>
    <property type="match status" value="1"/>
</dbReference>
<dbReference type="InterPro" id="IPR002177">
    <property type="entry name" value="DPS_DNA-bd"/>
</dbReference>
<dbReference type="InterPro" id="IPR023188">
    <property type="entry name" value="DPS_DNA-bd_CS"/>
</dbReference>
<dbReference type="InterPro" id="IPR023067">
    <property type="entry name" value="Dps_gammaproteobac"/>
</dbReference>
<dbReference type="InterPro" id="IPR012347">
    <property type="entry name" value="Ferritin-like"/>
</dbReference>
<dbReference type="InterPro" id="IPR009078">
    <property type="entry name" value="Ferritin-like_SF"/>
</dbReference>
<dbReference type="InterPro" id="IPR008331">
    <property type="entry name" value="Ferritin_DPS_dom"/>
</dbReference>
<dbReference type="NCBIfam" id="NF006975">
    <property type="entry name" value="PRK09448.1"/>
    <property type="match status" value="1"/>
</dbReference>
<dbReference type="PANTHER" id="PTHR42932:SF3">
    <property type="entry name" value="DNA PROTECTION DURING STARVATION PROTEIN"/>
    <property type="match status" value="1"/>
</dbReference>
<dbReference type="PANTHER" id="PTHR42932">
    <property type="entry name" value="GENERAL STRESS PROTEIN 20U"/>
    <property type="match status" value="1"/>
</dbReference>
<dbReference type="Pfam" id="PF00210">
    <property type="entry name" value="Ferritin"/>
    <property type="match status" value="1"/>
</dbReference>
<dbReference type="PIRSF" id="PIRSF005900">
    <property type="entry name" value="Dps"/>
    <property type="match status" value="1"/>
</dbReference>
<dbReference type="PRINTS" id="PR01346">
    <property type="entry name" value="HELNAPAPROT"/>
</dbReference>
<dbReference type="SUPFAM" id="SSF47240">
    <property type="entry name" value="Ferritin-like"/>
    <property type="match status" value="1"/>
</dbReference>
<dbReference type="PROSITE" id="PS00818">
    <property type="entry name" value="DPS_1"/>
    <property type="match status" value="1"/>
</dbReference>
<dbReference type="PROSITE" id="PS00819">
    <property type="entry name" value="DPS_2"/>
    <property type="match status" value="1"/>
</dbReference>
<name>DPS_SHIBS</name>
<sequence>MSTAKLVKSKATNLLYTRNDVSDSEKKATVELLNRQVIQFIDLSLITKQAHWNMRGANFIAVHEMLDGFRTALIDHLDTMAERAVQLGGVALGTTQVINSKTPLKSYPLDIHNVQDHLKELADRYAIVANDVRKAIGEAKDDDTADILTAASRDLDKFLWFIESNIE</sequence>
<reference key="1">
    <citation type="journal article" date="2005" name="Nucleic Acids Res.">
        <title>Genome dynamics and diversity of Shigella species, the etiologic agents of bacillary dysentery.</title>
        <authorList>
            <person name="Yang F."/>
            <person name="Yang J."/>
            <person name="Zhang X."/>
            <person name="Chen L."/>
            <person name="Jiang Y."/>
            <person name="Yan Y."/>
            <person name="Tang X."/>
            <person name="Wang J."/>
            <person name="Xiong Z."/>
            <person name="Dong J."/>
            <person name="Xue Y."/>
            <person name="Zhu Y."/>
            <person name="Xu X."/>
            <person name="Sun L."/>
            <person name="Chen S."/>
            <person name="Nie H."/>
            <person name="Peng J."/>
            <person name="Xu J."/>
            <person name="Wang Y."/>
            <person name="Yuan Z."/>
            <person name="Wen Y."/>
            <person name="Yao Z."/>
            <person name="Shen Y."/>
            <person name="Qiang B."/>
            <person name="Hou Y."/>
            <person name="Yu J."/>
            <person name="Jin Q."/>
        </authorList>
    </citation>
    <scope>NUCLEOTIDE SEQUENCE [LARGE SCALE GENOMIC DNA]</scope>
    <source>
        <strain>Sb227</strain>
    </source>
</reference>
<comment type="function">
    <text evidence="2">During stationary phase, binds the chromosome non-specifically, forming a highly ordered and stable dps-DNA co-crystal within which chromosomal DNA is condensed and protected from diverse damages. It protects DNA from oxidative damage by sequestering intracellular Fe(2+) ion and storing it in the form of Fe(3+) oxyhydroxide mineral, which can be released after reduction. One hydrogen peroxide oxidizes two Fe(2+) ions, which prevents hydroxyl radical production by the Fenton reaction. Dps also protects the cell from UV and gamma irradiation, iron and copper toxicity, thermal stress and acid and base shocks. Also shows a weak catalase activity.</text>
</comment>
<comment type="catalytic activity">
    <reaction evidence="2">
        <text>2 Fe(2+) + H2O2 + 2 H(+) = 2 Fe(3+) + 2 H2O</text>
        <dbReference type="Rhea" id="RHEA:48712"/>
        <dbReference type="ChEBI" id="CHEBI:15377"/>
        <dbReference type="ChEBI" id="CHEBI:15378"/>
        <dbReference type="ChEBI" id="CHEBI:16240"/>
        <dbReference type="ChEBI" id="CHEBI:29033"/>
        <dbReference type="ChEBI" id="CHEBI:29034"/>
    </reaction>
</comment>
<comment type="subunit">
    <text evidence="2">Homododecamer. The 12 subunits form a hollow sphere into which the mineral iron core of up to 500 Fe(3+) can be deposited.</text>
</comment>
<comment type="subcellular location">
    <subcellularLocation>
        <location evidence="2">Cytoplasm</location>
        <location evidence="2">Nucleoid</location>
    </subcellularLocation>
</comment>
<comment type="similarity">
    <text evidence="2">Belongs to the Dps family.</text>
</comment>
<evidence type="ECO:0000250" key="1"/>
<evidence type="ECO:0000255" key="2">
    <source>
        <dbReference type="HAMAP-Rule" id="MF_01441"/>
    </source>
</evidence>
<accession>Q323Y1</accession>